<name>TM256_BOVIN</name>
<dbReference type="EMBL" id="BC112791">
    <property type="protein sequence ID" value="AAI12792.1"/>
    <property type="molecule type" value="mRNA"/>
</dbReference>
<dbReference type="RefSeq" id="NP_001039422.1">
    <property type="nucleotide sequence ID" value="NM_001045957.1"/>
</dbReference>
<dbReference type="FunCoup" id="Q2KI29">
    <property type="interactions" value="1486"/>
</dbReference>
<dbReference type="STRING" id="9913.ENSBTAP00000023810"/>
<dbReference type="PaxDb" id="9913-ENSBTAP00000023810"/>
<dbReference type="PeptideAtlas" id="Q2KI29"/>
<dbReference type="GeneID" id="507083"/>
<dbReference type="KEGG" id="bta:507083"/>
<dbReference type="CTD" id="254863"/>
<dbReference type="VEuPathDB" id="HostDB:ENSBTAG00000031752"/>
<dbReference type="eggNOG" id="KOG3472">
    <property type="taxonomic scope" value="Eukaryota"/>
</dbReference>
<dbReference type="HOGENOM" id="CLU_096548_1_2_1"/>
<dbReference type="InParanoid" id="Q2KI29"/>
<dbReference type="OMA" id="YHYSITG"/>
<dbReference type="OrthoDB" id="269173at2759"/>
<dbReference type="TreeFam" id="TF300271"/>
<dbReference type="Proteomes" id="UP000009136">
    <property type="component" value="Chromosome 19"/>
</dbReference>
<dbReference type="Bgee" id="ENSBTAG00000031752">
    <property type="expression patterns" value="Expressed in pons and 101 other cell types or tissues"/>
</dbReference>
<dbReference type="GO" id="GO:0016020">
    <property type="term" value="C:membrane"/>
    <property type="evidence" value="ECO:0000318"/>
    <property type="project" value="GO_Central"/>
</dbReference>
<dbReference type="InterPro" id="IPR006696">
    <property type="entry name" value="DUF423"/>
</dbReference>
<dbReference type="PANTHER" id="PTHR43461">
    <property type="entry name" value="TRANSMEMBRANE PROTEIN 256"/>
    <property type="match status" value="1"/>
</dbReference>
<dbReference type="PANTHER" id="PTHR43461:SF1">
    <property type="entry name" value="TRANSMEMBRANE PROTEIN 256"/>
    <property type="match status" value="1"/>
</dbReference>
<dbReference type="Pfam" id="PF04241">
    <property type="entry name" value="DUF423"/>
    <property type="match status" value="1"/>
</dbReference>
<sequence>MAGPGAAFRRLGALSGAGALGLASYGAHGAQFPDAYGKELFDKTNKHHFLHSLALLAVPLCRKPLWAGLLLASGTTLFCTTFYYQALSGDPSFQNLAPVGGSLLLLGWLALAL</sequence>
<feature type="signal peptide" evidence="2">
    <location>
        <begin position="1"/>
        <end position="29"/>
    </location>
</feature>
<feature type="chain" id="PRO_0000287169" description="Transmembrane protein 256">
    <location>
        <begin position="30"/>
        <end position="113"/>
    </location>
</feature>
<feature type="topological domain" description="Extracellular" evidence="2">
    <location>
        <begin position="30"/>
        <end position="63"/>
    </location>
</feature>
<feature type="transmembrane region" description="Helical" evidence="2">
    <location>
        <begin position="64"/>
        <end position="84"/>
    </location>
</feature>
<feature type="topological domain" description="Cytoplasmic" evidence="2">
    <location>
        <begin position="85"/>
        <end position="92"/>
    </location>
</feature>
<feature type="transmembrane region" description="Helical" evidence="2">
    <location>
        <begin position="93"/>
        <end position="113"/>
    </location>
</feature>
<feature type="modified residue" description="N6-acetyllysine" evidence="1">
    <location>
        <position position="43"/>
    </location>
</feature>
<reference key="1">
    <citation type="submission" date="2006-01" db="EMBL/GenBank/DDBJ databases">
        <authorList>
            <consortium name="NIH - Mammalian Gene Collection (MGC) project"/>
        </authorList>
    </citation>
    <scope>NUCLEOTIDE SEQUENCE [LARGE SCALE MRNA]</scope>
    <source>
        <strain>Hereford</strain>
        <tissue>Hypothalamus</tissue>
    </source>
</reference>
<gene>
    <name type="primary">TMEM256</name>
</gene>
<comment type="subcellular location">
    <subcellularLocation>
        <location evidence="3">Membrane</location>
        <topology evidence="3">Multi-pass membrane protein</topology>
    </subcellularLocation>
</comment>
<comment type="similarity">
    <text evidence="3">Belongs to the TMEM256 family.</text>
</comment>
<protein>
    <recommendedName>
        <fullName>Transmembrane protein 256</fullName>
    </recommendedName>
</protein>
<keyword id="KW-0007">Acetylation</keyword>
<keyword id="KW-0472">Membrane</keyword>
<keyword id="KW-1185">Reference proteome</keyword>
<keyword id="KW-0732">Signal</keyword>
<keyword id="KW-0812">Transmembrane</keyword>
<keyword id="KW-1133">Transmembrane helix</keyword>
<organism>
    <name type="scientific">Bos taurus</name>
    <name type="common">Bovine</name>
    <dbReference type="NCBI Taxonomy" id="9913"/>
    <lineage>
        <taxon>Eukaryota</taxon>
        <taxon>Metazoa</taxon>
        <taxon>Chordata</taxon>
        <taxon>Craniata</taxon>
        <taxon>Vertebrata</taxon>
        <taxon>Euteleostomi</taxon>
        <taxon>Mammalia</taxon>
        <taxon>Eutheria</taxon>
        <taxon>Laurasiatheria</taxon>
        <taxon>Artiodactyla</taxon>
        <taxon>Ruminantia</taxon>
        <taxon>Pecora</taxon>
        <taxon>Bovidae</taxon>
        <taxon>Bovinae</taxon>
        <taxon>Bos</taxon>
    </lineage>
</organism>
<proteinExistence type="inferred from homology"/>
<evidence type="ECO:0000250" key="1">
    <source>
        <dbReference type="UniProtKB" id="Q5F285"/>
    </source>
</evidence>
<evidence type="ECO:0000255" key="2"/>
<evidence type="ECO:0000305" key="3"/>
<accession>Q2KI29</accession>